<organism>
    <name type="scientific">Pyrobaculum aerophilum (strain ATCC 51768 / DSM 7523 / JCM 9630 / CIP 104966 / NBRC 100827 / IM2)</name>
    <dbReference type="NCBI Taxonomy" id="178306"/>
    <lineage>
        <taxon>Archaea</taxon>
        <taxon>Thermoproteota</taxon>
        <taxon>Thermoprotei</taxon>
        <taxon>Thermoproteales</taxon>
        <taxon>Thermoproteaceae</taxon>
        <taxon>Pyrobaculum</taxon>
    </lineage>
</organism>
<reference key="1">
    <citation type="journal article" date="2002" name="Proc. Natl. Acad. Sci. U.S.A.">
        <title>Genome sequence of the hyperthermophilic crenarchaeon Pyrobaculum aerophilum.</title>
        <authorList>
            <person name="Fitz-Gibbon S.T."/>
            <person name="Ladner H."/>
            <person name="Kim U.-J."/>
            <person name="Stetter K.O."/>
            <person name="Simon M.I."/>
            <person name="Miller J.H."/>
        </authorList>
    </citation>
    <scope>NUCLEOTIDE SEQUENCE [LARGE SCALE GENOMIC DNA]</scope>
    <source>
        <strain>ATCC 51768 / DSM 7523 / JCM 9630 / CIP 104966 / NBRC 100827 / IM2</strain>
    </source>
</reference>
<sequence length="305" mass="34241">MKHLLTLMEFAPHEVEYLLRVSREFKTRFLAGEIYTPLFPGRVLILYFEKHSTRTRLSLTSAAAQLGIQAVYTTPNELQIARGETVADTMRVISRYAAAVAARVYKHETLEEMARHSAIPVINALSDKHHPLQALADALTLWERAGRLHNVKIAFVGDVSNNVATSLAIIGAKLGWEVRLVGPKQLWNQRLVDELAEDAAKTGARIYFTDSINEVAGVDGVYTDVWVSMGFEKEAEERRRLLKPYQVNQRVMEIAGKKAVFLHCLPAHRGEEVTDDVIDGPQSAVWDQAENRMHTAKAVLAYLLK</sequence>
<keyword id="KW-0028">Amino-acid biosynthesis</keyword>
<keyword id="KW-0055">Arginine biosynthesis</keyword>
<keyword id="KW-0963">Cytoplasm</keyword>
<keyword id="KW-1185">Reference proteome</keyword>
<keyword id="KW-0808">Transferase</keyword>
<dbReference type="EC" id="2.1.3.3" evidence="2"/>
<dbReference type="EMBL" id="AE009441">
    <property type="protein sequence ID" value="AAL63862.1"/>
    <property type="molecule type" value="Genomic_DNA"/>
</dbReference>
<dbReference type="RefSeq" id="WP_011008333.1">
    <property type="nucleotide sequence ID" value="NC_003364.1"/>
</dbReference>
<dbReference type="SMR" id="Q8ZW40"/>
<dbReference type="FunCoup" id="Q8ZW40">
    <property type="interactions" value="208"/>
</dbReference>
<dbReference type="STRING" id="178306.PAE1985"/>
<dbReference type="EnsemblBacteria" id="AAL63862">
    <property type="protein sequence ID" value="AAL63862"/>
    <property type="gene ID" value="PAE1985"/>
</dbReference>
<dbReference type="GeneID" id="1464185"/>
<dbReference type="KEGG" id="pai:PAE1985"/>
<dbReference type="PATRIC" id="fig|178306.9.peg.1466"/>
<dbReference type="eggNOG" id="arCOG00912">
    <property type="taxonomic scope" value="Archaea"/>
</dbReference>
<dbReference type="HOGENOM" id="CLU_043846_3_2_2"/>
<dbReference type="InParanoid" id="Q8ZW40"/>
<dbReference type="UniPathway" id="UPA00068">
    <property type="reaction ID" value="UER00112"/>
</dbReference>
<dbReference type="Proteomes" id="UP000002439">
    <property type="component" value="Chromosome"/>
</dbReference>
<dbReference type="GO" id="GO:0005737">
    <property type="term" value="C:cytoplasm"/>
    <property type="evidence" value="ECO:0007669"/>
    <property type="project" value="UniProtKB-SubCell"/>
</dbReference>
<dbReference type="GO" id="GO:0016597">
    <property type="term" value="F:amino acid binding"/>
    <property type="evidence" value="ECO:0007669"/>
    <property type="project" value="InterPro"/>
</dbReference>
<dbReference type="GO" id="GO:0004585">
    <property type="term" value="F:ornithine carbamoyltransferase activity"/>
    <property type="evidence" value="ECO:0000318"/>
    <property type="project" value="GO_Central"/>
</dbReference>
<dbReference type="GO" id="GO:0042450">
    <property type="term" value="P:arginine biosynthetic process via ornithine"/>
    <property type="evidence" value="ECO:0000318"/>
    <property type="project" value="GO_Central"/>
</dbReference>
<dbReference type="GO" id="GO:0019240">
    <property type="term" value="P:citrulline biosynthetic process"/>
    <property type="evidence" value="ECO:0000318"/>
    <property type="project" value="GO_Central"/>
</dbReference>
<dbReference type="GO" id="GO:0006526">
    <property type="term" value="P:L-arginine biosynthetic process"/>
    <property type="evidence" value="ECO:0007669"/>
    <property type="project" value="UniProtKB-UniRule"/>
</dbReference>
<dbReference type="FunFam" id="3.40.50.1370:FF:000049">
    <property type="match status" value="1"/>
</dbReference>
<dbReference type="FunFam" id="3.40.50.1370:FF:000008">
    <property type="entry name" value="Ornithine carbamoyltransferase"/>
    <property type="match status" value="1"/>
</dbReference>
<dbReference type="Gene3D" id="3.40.50.1370">
    <property type="entry name" value="Aspartate/ornithine carbamoyltransferase"/>
    <property type="match status" value="2"/>
</dbReference>
<dbReference type="HAMAP" id="MF_01109">
    <property type="entry name" value="OTCase"/>
    <property type="match status" value="1"/>
</dbReference>
<dbReference type="InterPro" id="IPR006132">
    <property type="entry name" value="Asp/Orn_carbamoyltranf_P-bd"/>
</dbReference>
<dbReference type="InterPro" id="IPR006130">
    <property type="entry name" value="Asp/Orn_carbamoylTrfase"/>
</dbReference>
<dbReference type="InterPro" id="IPR036901">
    <property type="entry name" value="Asp/Orn_carbamoylTrfase_sf"/>
</dbReference>
<dbReference type="InterPro" id="IPR006131">
    <property type="entry name" value="Asp_carbamoyltransf_Asp/Orn-bd"/>
</dbReference>
<dbReference type="InterPro" id="IPR002292">
    <property type="entry name" value="Orn/put_carbamltrans"/>
</dbReference>
<dbReference type="InterPro" id="IPR024904">
    <property type="entry name" value="OTCase_ArgI"/>
</dbReference>
<dbReference type="NCBIfam" id="TIGR00658">
    <property type="entry name" value="orni_carb_tr"/>
    <property type="match status" value="1"/>
</dbReference>
<dbReference type="NCBIfam" id="NF001986">
    <property type="entry name" value="PRK00779.1"/>
    <property type="match status" value="1"/>
</dbReference>
<dbReference type="PANTHER" id="PTHR45753">
    <property type="entry name" value="ORNITHINE CARBAMOYLTRANSFERASE, MITOCHONDRIAL"/>
    <property type="match status" value="1"/>
</dbReference>
<dbReference type="PANTHER" id="PTHR45753:SF3">
    <property type="entry name" value="ORNITHINE TRANSCARBAMYLASE, MITOCHONDRIAL"/>
    <property type="match status" value="1"/>
</dbReference>
<dbReference type="Pfam" id="PF00185">
    <property type="entry name" value="OTCace"/>
    <property type="match status" value="1"/>
</dbReference>
<dbReference type="Pfam" id="PF02729">
    <property type="entry name" value="OTCace_N"/>
    <property type="match status" value="1"/>
</dbReference>
<dbReference type="PRINTS" id="PR00100">
    <property type="entry name" value="AOTCASE"/>
</dbReference>
<dbReference type="PRINTS" id="PR00102">
    <property type="entry name" value="OTCASE"/>
</dbReference>
<dbReference type="SUPFAM" id="SSF53671">
    <property type="entry name" value="Aspartate/ornithine carbamoyltransferase"/>
    <property type="match status" value="1"/>
</dbReference>
<dbReference type="PROSITE" id="PS00097">
    <property type="entry name" value="CARBAMOYLTRANSFERASE"/>
    <property type="match status" value="1"/>
</dbReference>
<name>OTC_PYRAE</name>
<feature type="initiator methionine" description="Removed" evidence="1">
    <location>
        <position position="1"/>
    </location>
</feature>
<feature type="chain" id="PRO_0000113072" description="Ornithine carbamoyltransferase">
    <location>
        <begin position="2"/>
        <end position="305"/>
    </location>
</feature>
<feature type="binding site" evidence="2">
    <location>
        <begin position="52"/>
        <end position="55"/>
    </location>
    <ligand>
        <name>carbamoyl phosphate</name>
        <dbReference type="ChEBI" id="CHEBI:58228"/>
    </ligand>
</feature>
<feature type="binding site" evidence="2">
    <location>
        <position position="79"/>
    </location>
    <ligand>
        <name>carbamoyl phosphate</name>
        <dbReference type="ChEBI" id="CHEBI:58228"/>
    </ligand>
</feature>
<feature type="binding site" evidence="2">
    <location>
        <position position="103"/>
    </location>
    <ligand>
        <name>carbamoyl phosphate</name>
        <dbReference type="ChEBI" id="CHEBI:58228"/>
    </ligand>
</feature>
<feature type="binding site" evidence="2">
    <location>
        <begin position="130"/>
        <end position="133"/>
    </location>
    <ligand>
        <name>carbamoyl phosphate</name>
        <dbReference type="ChEBI" id="CHEBI:58228"/>
    </ligand>
</feature>
<feature type="binding site" evidence="2">
    <location>
        <position position="162"/>
    </location>
    <ligand>
        <name>L-ornithine</name>
        <dbReference type="ChEBI" id="CHEBI:46911"/>
    </ligand>
</feature>
<feature type="binding site" evidence="2">
    <location>
        <position position="224"/>
    </location>
    <ligand>
        <name>L-ornithine</name>
        <dbReference type="ChEBI" id="CHEBI:46911"/>
    </ligand>
</feature>
<feature type="binding site" evidence="2">
    <location>
        <begin position="228"/>
        <end position="229"/>
    </location>
    <ligand>
        <name>L-ornithine</name>
        <dbReference type="ChEBI" id="CHEBI:46911"/>
    </ligand>
</feature>
<feature type="binding site" evidence="2">
    <location>
        <begin position="264"/>
        <end position="265"/>
    </location>
    <ligand>
        <name>carbamoyl phosphate</name>
        <dbReference type="ChEBI" id="CHEBI:58228"/>
    </ligand>
</feature>
<feature type="binding site" evidence="2">
    <location>
        <position position="292"/>
    </location>
    <ligand>
        <name>carbamoyl phosphate</name>
        <dbReference type="ChEBI" id="CHEBI:58228"/>
    </ligand>
</feature>
<proteinExistence type="inferred from homology"/>
<gene>
    <name evidence="2" type="primary">argF</name>
    <name type="ordered locus">PAE1985</name>
</gene>
<accession>Q8ZW40</accession>
<comment type="function">
    <text evidence="1">Reversibly catalyzes the transfer of the carbamoyl group from carbamoyl phosphate (CP) to the N(epsilon) atom of ornithine (ORN) to produce L-citrulline.</text>
</comment>
<comment type="catalytic activity">
    <reaction evidence="2">
        <text>carbamoyl phosphate + L-ornithine = L-citrulline + phosphate + H(+)</text>
        <dbReference type="Rhea" id="RHEA:19513"/>
        <dbReference type="ChEBI" id="CHEBI:15378"/>
        <dbReference type="ChEBI" id="CHEBI:43474"/>
        <dbReference type="ChEBI" id="CHEBI:46911"/>
        <dbReference type="ChEBI" id="CHEBI:57743"/>
        <dbReference type="ChEBI" id="CHEBI:58228"/>
        <dbReference type="EC" id="2.1.3.3"/>
    </reaction>
</comment>
<comment type="pathway">
    <text evidence="2">Amino-acid biosynthesis; L-arginine biosynthesis; L-arginine from L-ornithine and carbamoyl phosphate: step 1/3.</text>
</comment>
<comment type="subcellular location">
    <subcellularLocation>
        <location evidence="2">Cytoplasm</location>
    </subcellularLocation>
</comment>
<comment type="similarity">
    <text evidence="2">Belongs to the aspartate/ornithine carbamoyltransferase superfamily. OTCase family.</text>
</comment>
<protein>
    <recommendedName>
        <fullName evidence="2">Ornithine carbamoyltransferase</fullName>
        <shortName evidence="2">OTCase</shortName>
        <ecNumber evidence="2">2.1.3.3</ecNumber>
    </recommendedName>
</protein>
<evidence type="ECO:0000250" key="1"/>
<evidence type="ECO:0000255" key="2">
    <source>
        <dbReference type="HAMAP-Rule" id="MF_01109"/>
    </source>
</evidence>